<protein>
    <recommendedName>
        <fullName>V-type proton ATPase subunit S1</fullName>
        <shortName>V-ATPase subunit S1</shortName>
    </recommendedName>
    <alternativeName>
        <fullName>Protein C7-1</fullName>
    </alternativeName>
    <alternativeName>
        <fullName>V-ATPase Ac45 subunit</fullName>
    </alternativeName>
    <alternativeName>
        <fullName>V-ATPase S1 accessory protein</fullName>
    </alternativeName>
    <alternativeName>
        <fullName>Vacuolar proton pump subunit S1</fullName>
    </alternativeName>
</protein>
<organism>
    <name type="scientific">Mus musculus</name>
    <name type="common">Mouse</name>
    <dbReference type="NCBI Taxonomy" id="10090"/>
    <lineage>
        <taxon>Eukaryota</taxon>
        <taxon>Metazoa</taxon>
        <taxon>Chordata</taxon>
        <taxon>Craniata</taxon>
        <taxon>Vertebrata</taxon>
        <taxon>Euteleostomi</taxon>
        <taxon>Mammalia</taxon>
        <taxon>Eutheria</taxon>
        <taxon>Euarchontoglires</taxon>
        <taxon>Glires</taxon>
        <taxon>Rodentia</taxon>
        <taxon>Myomorpha</taxon>
        <taxon>Muroidea</taxon>
        <taxon>Muridae</taxon>
        <taxon>Murinae</taxon>
        <taxon>Mus</taxon>
        <taxon>Mus</taxon>
    </lineage>
</organism>
<reference key="1">
    <citation type="submission" date="1999-08" db="EMBL/GenBank/DDBJ databases">
        <authorList>
            <person name="Hayashi A."/>
            <person name="Hattori A."/>
            <person name="Okaze H."/>
            <person name="Kozuma S."/>
            <person name="Seki N."/>
            <person name="Saito T."/>
        </authorList>
    </citation>
    <scope>NUCLEOTIDE SEQUENCE [MRNA]</scope>
</reference>
<reference key="2">
    <citation type="journal article" date="2004" name="Genome Res.">
        <title>The status, quality, and expansion of the NIH full-length cDNA project: the Mammalian Gene Collection (MGC).</title>
        <authorList>
            <consortium name="The MGC Project Team"/>
        </authorList>
    </citation>
    <scope>NUCLEOTIDE SEQUENCE [LARGE SCALE MRNA]</scope>
    <source>
        <tissue>Retina</tissue>
    </source>
</reference>
<reference key="3">
    <citation type="submission" date="2007-04" db="UniProtKB">
        <authorList>
            <person name="Lubec G."/>
            <person name="Kang S.U."/>
        </authorList>
    </citation>
    <scope>PROTEIN SEQUENCE OF 325-338 AND 454-463</scope>
    <scope>IDENTIFICATION BY MASS SPECTROMETRY</scope>
    <source>
        <strain>C57BL/6J</strain>
        <tissue>Brain</tissue>
    </source>
</reference>
<reference key="4">
    <citation type="journal article" date="2008" name="Proc. Natl. Acad. Sci. U.S.A.">
        <title>Role of furin in granular acidification in the endocrine pancreas: identification of the V-ATPase subunit Ac45 as a candidate substrate.</title>
        <authorList>
            <person name="Louagie E."/>
            <person name="Taylor N.A."/>
            <person name="Flamez D."/>
            <person name="Roebroek A.J."/>
            <person name="Bright N.A."/>
            <person name="Meulemans S."/>
            <person name="Quintens R."/>
            <person name="Herrera P.L."/>
            <person name="Schuit F."/>
            <person name="Van de Ven W.J."/>
            <person name="Creemers J.W."/>
        </authorList>
    </citation>
    <scope>FUNCTION</scope>
    <scope>TISSUE SPECIFICITY</scope>
    <scope>GLYCOSYLATION</scope>
    <scope>PROTEOLYTIC CLEAVAGE</scope>
    <scope>MUTAGENESIS OF 222-ARG--ARG-225</scope>
</reference>
<reference key="5">
    <citation type="journal article" date="2009" name="Nat. Biotechnol.">
        <title>Mass-spectrometric identification and relative quantification of N-linked cell surface glycoproteins.</title>
        <authorList>
            <person name="Wollscheid B."/>
            <person name="Bausch-Fluck D."/>
            <person name="Henderson C."/>
            <person name="O'Brien R."/>
            <person name="Bibel M."/>
            <person name="Schiess R."/>
            <person name="Aebersold R."/>
            <person name="Watts J.D."/>
        </authorList>
    </citation>
    <scope>GLYCOSYLATION [LARGE SCALE ANALYSIS] AT ASN-255</scope>
</reference>
<reference key="6">
    <citation type="journal article" date="2010" name="Cell">
        <title>A tissue-specific atlas of mouse protein phosphorylation and expression.</title>
        <authorList>
            <person name="Huttlin E.L."/>
            <person name="Jedrychowski M.P."/>
            <person name="Elias J.E."/>
            <person name="Goswami T."/>
            <person name="Rad R."/>
            <person name="Beausoleil S.A."/>
            <person name="Villen J."/>
            <person name="Haas W."/>
            <person name="Sowa M.E."/>
            <person name="Gygi S.P."/>
        </authorList>
    </citation>
    <scope>IDENTIFICATION BY MASS SPECTROMETRY [LARGE SCALE ANALYSIS]</scope>
    <source>
        <tissue>Brain</tissue>
        <tissue>Testis</tissue>
    </source>
</reference>
<reference key="7">
    <citation type="journal article" date="2016" name="Nat. Commun.">
        <title>ATP6AP1 deficiency causes an immunodeficiency with hepatopathy, cognitive impairment and abnormal protein glycosylation.</title>
        <authorList>
            <person name="Jansen E.J."/>
            <person name="Timal S."/>
            <person name="Ryan M."/>
            <person name="Ashikov A."/>
            <person name="van Scherpenzeel M."/>
            <person name="Graham L.A."/>
            <person name="Mandel H."/>
            <person name="Hoischen A."/>
            <person name="Iancu T.C."/>
            <person name="Raymond K."/>
            <person name="Steenbergen G."/>
            <person name="Gilissen C."/>
            <person name="Huijben K."/>
            <person name="van Bakel N.H."/>
            <person name="Maeda Y."/>
            <person name="Rodenburg R.J."/>
            <person name="Adamowicz M."/>
            <person name="Crushell E."/>
            <person name="Koenen H."/>
            <person name="Adams D."/>
            <person name="Vodopiutz J."/>
            <person name="Greber-Platzer S."/>
            <person name="Mueller T."/>
            <person name="Dueckers G."/>
            <person name="Morava E."/>
            <person name="Sykut-Cegielska J."/>
            <person name="Martens G.J."/>
            <person name="Wevers R.A."/>
            <person name="Niehues T."/>
            <person name="Huynen M.A."/>
            <person name="Veltman J.A."/>
            <person name="Stevens T.H."/>
            <person name="Lefeber D.J."/>
        </authorList>
    </citation>
    <scope>TISSUE SPECIFICITY</scope>
    <scope>GLYCOSYLATION</scope>
</reference>
<feature type="signal peptide" evidence="3">
    <location>
        <begin position="1"/>
        <end position="32"/>
    </location>
</feature>
<feature type="chain" id="PRO_0000002544" description="V-type proton ATPase subunit S1">
    <location>
        <begin position="33"/>
        <end position="463"/>
    </location>
</feature>
<feature type="propeptide" id="PRO_0000454042" evidence="4">
    <location>
        <begin position="33"/>
        <end position="225"/>
    </location>
</feature>
<feature type="topological domain" description="Lumenal" evidence="3">
    <location>
        <begin position="33"/>
        <end position="412"/>
    </location>
</feature>
<feature type="transmembrane region" description="Helical" evidence="3">
    <location>
        <begin position="413"/>
        <end position="433"/>
    </location>
</feature>
<feature type="topological domain" description="Cytoplasmic" evidence="3">
    <location>
        <begin position="434"/>
        <end position="463"/>
    </location>
</feature>
<feature type="site" description="Cleavage; by furin" evidence="4">
    <location>
        <begin position="225"/>
        <end position="226"/>
    </location>
</feature>
<feature type="glycosylation site" description="N-linked (GlcNAc...) asparagine" evidence="3">
    <location>
        <position position="164"/>
    </location>
</feature>
<feature type="glycosylation site" description="N-linked (GlcNAc...) asparagine" evidence="5">
    <location>
        <position position="255"/>
    </location>
</feature>
<feature type="glycosylation site" description="N-linked (GlcNAc...) asparagine" evidence="3">
    <location>
        <position position="267"/>
    </location>
</feature>
<feature type="glycosylation site" description="N-linked (GlcNAc...) asparagine" evidence="3">
    <location>
        <position position="290"/>
    </location>
</feature>
<feature type="glycosylation site" description="N-linked (GlcNAc...) asparagine" evidence="3">
    <location>
        <position position="297"/>
    </location>
</feature>
<feature type="glycosylation site" description="N-linked (GlcNAc...) asparagine" evidence="3">
    <location>
        <position position="344"/>
    </location>
</feature>
<feature type="glycosylation site" description="N-linked (GlcNAc...) asparagine" evidence="3">
    <location>
        <position position="351"/>
    </location>
</feature>
<feature type="glycosylation site" description="N-linked (GlcNAc...) asparagine" evidence="3">
    <location>
        <position position="399"/>
    </location>
</feature>
<feature type="disulfide bond" evidence="2">
    <location>
        <begin position="365"/>
        <end position="411"/>
    </location>
</feature>
<feature type="mutagenesis site" description="Impairs propeptide cleavage." evidence="4">
    <original>RVAR</original>
    <variation>AVAA</variation>
    <location>
        <begin position="222"/>
        <end position="225"/>
    </location>
</feature>
<name>VAS1_MOUSE</name>
<gene>
    <name type="primary">Atp6ap1</name>
    <name type="synonym">Atp6ip1</name>
    <name type="synonym">Atp6s1</name>
</gene>
<sequence>MMAATVVSRIRTGTGRAPVMWLSLSLVAVAAAVATEQQVPLVLWSSDRNLWAPVADTHEGHITSDMQLSTYLDPALELGPRNVLLFLQDKLSIEDFTAYGGVFGNKQDSAFSNLENALDLAPSSLVLPAVDWYAISTLTTYLQEKLGASPLHVDLATLKELKLNASLPALLLIRLPYTASSGLMAPREVLTGNDEVIGQVLSTLKSEDVPYTAALTAVRPSRVARDITMVAGGLGRQLLQTQVASPAIHPPVSYNDTAPRILFWAQNFSVAYKDEWKDLTSLTFGVENLNLTGSFWNDSFAMLSLTYEPLFGATVTFKFILASRFYPVSARYWFAMERLEIHSNGSVAHFNVSQVTGPSIYSFHCEYVSSVSKKGNLLVTNVPSVWQMTLHNFQIQAFNVTGEQFSYASDCAGFFSPGIWMGLLTTLFMLFIFTYGLHMILSLKTMDRFDDHKGPTITLTQIV</sequence>
<dbReference type="EMBL" id="AB031290">
    <property type="protein sequence ID" value="BAA83498.1"/>
    <property type="molecule type" value="mRNA"/>
</dbReference>
<dbReference type="EMBL" id="BC048241">
    <property type="protein sequence ID" value="AAH48241.1"/>
    <property type="molecule type" value="mRNA"/>
</dbReference>
<dbReference type="CCDS" id="CCDS30226.1"/>
<dbReference type="RefSeq" id="NP_061264.1">
    <property type="nucleotide sequence ID" value="NM_018794.5"/>
</dbReference>
<dbReference type="PDB" id="9BRA">
    <property type="method" value="EM"/>
    <property type="resolution" value="4.30 A"/>
    <property type="chains" value="c=1-463"/>
</dbReference>
<dbReference type="PDB" id="9BRQ">
    <property type="method" value="EM"/>
    <property type="resolution" value="4.30 A"/>
    <property type="chains" value="c=1-463"/>
</dbReference>
<dbReference type="PDB" id="9BRR">
    <property type="method" value="EM"/>
    <property type="resolution" value="4.50 A"/>
    <property type="chains" value="c=1-463"/>
</dbReference>
<dbReference type="PDB" id="9BRS">
    <property type="method" value="EM"/>
    <property type="resolution" value="4.40 A"/>
    <property type="chains" value="c=1-463"/>
</dbReference>
<dbReference type="PDB" id="9BRT">
    <property type="method" value="EM"/>
    <property type="resolution" value="4.30 A"/>
    <property type="chains" value="c=1-463"/>
</dbReference>
<dbReference type="PDB" id="9BRU">
    <property type="method" value="EM"/>
    <property type="resolution" value="4.40 A"/>
    <property type="chains" value="c=1-463"/>
</dbReference>
<dbReference type="PDB" id="9BRY">
    <property type="method" value="EM"/>
    <property type="resolution" value="3.60 A"/>
    <property type="chains" value="c=1-463"/>
</dbReference>
<dbReference type="PDB" id="9BRZ">
    <property type="method" value="EM"/>
    <property type="resolution" value="3.80 A"/>
    <property type="chains" value="c=1-463"/>
</dbReference>
<dbReference type="PDBsum" id="9BRA"/>
<dbReference type="PDBsum" id="9BRQ"/>
<dbReference type="PDBsum" id="9BRR"/>
<dbReference type="PDBsum" id="9BRS"/>
<dbReference type="PDBsum" id="9BRT"/>
<dbReference type="PDBsum" id="9BRU"/>
<dbReference type="PDBsum" id="9BRY"/>
<dbReference type="PDBsum" id="9BRZ"/>
<dbReference type="EMDB" id="EMD-44839"/>
<dbReference type="EMDB" id="EMD-44840"/>
<dbReference type="EMDB" id="EMD-44841"/>
<dbReference type="EMDB" id="EMD-44842"/>
<dbReference type="EMDB" id="EMD-44843"/>
<dbReference type="EMDB" id="EMD-44844"/>
<dbReference type="EMDB" id="EMD-44845"/>
<dbReference type="EMDB" id="EMD-44846"/>
<dbReference type="SMR" id="Q9R1Q9"/>
<dbReference type="BioGRID" id="207653">
    <property type="interactions" value="5"/>
</dbReference>
<dbReference type="FunCoup" id="Q9R1Q9">
    <property type="interactions" value="800"/>
</dbReference>
<dbReference type="IntAct" id="Q9R1Q9">
    <property type="interactions" value="1"/>
</dbReference>
<dbReference type="MINT" id="Q9R1Q9"/>
<dbReference type="STRING" id="10090.ENSMUSP00000019231"/>
<dbReference type="GlyConnect" id="2826">
    <property type="glycosylation" value="7 N-Linked glycans (4 sites)"/>
</dbReference>
<dbReference type="GlyCosmos" id="Q9R1Q9">
    <property type="glycosylation" value="8 sites, 7 glycans"/>
</dbReference>
<dbReference type="GlyGen" id="Q9R1Q9">
    <property type="glycosylation" value="9 sites, 12 N-linked glycans (5 sites), 1 O-linked glycan (1 site)"/>
</dbReference>
<dbReference type="iPTMnet" id="Q9R1Q9"/>
<dbReference type="PhosphoSitePlus" id="Q9R1Q9"/>
<dbReference type="SwissPalm" id="Q9R1Q9"/>
<dbReference type="jPOST" id="Q9R1Q9"/>
<dbReference type="PaxDb" id="10090-ENSMUSP00000019231"/>
<dbReference type="PeptideAtlas" id="Q9R1Q9"/>
<dbReference type="ProteomicsDB" id="298272"/>
<dbReference type="Pumba" id="Q9R1Q9"/>
<dbReference type="Antibodypedia" id="31229">
    <property type="antibodies" value="217 antibodies from 27 providers"/>
</dbReference>
<dbReference type="DNASU" id="54411"/>
<dbReference type="Ensembl" id="ENSMUST00000019231.12">
    <property type="protein sequence ID" value="ENSMUSP00000019231.6"/>
    <property type="gene ID" value="ENSMUSG00000019087.14"/>
</dbReference>
<dbReference type="GeneID" id="54411"/>
<dbReference type="KEGG" id="mmu:54411"/>
<dbReference type="UCSC" id="uc009tol.2">
    <property type="organism name" value="mouse"/>
</dbReference>
<dbReference type="AGR" id="MGI:109629"/>
<dbReference type="CTD" id="537"/>
<dbReference type="MGI" id="MGI:109629">
    <property type="gene designation" value="Atp6ap1"/>
</dbReference>
<dbReference type="VEuPathDB" id="HostDB:ENSMUSG00000019087"/>
<dbReference type="eggNOG" id="KOG3868">
    <property type="taxonomic scope" value="Eukaryota"/>
</dbReference>
<dbReference type="GeneTree" id="ENSGT00940000156650"/>
<dbReference type="HOGENOM" id="CLU_039408_1_0_1"/>
<dbReference type="InParanoid" id="Q9R1Q9"/>
<dbReference type="OMA" id="WFTMEHL"/>
<dbReference type="OrthoDB" id="9985059at2759"/>
<dbReference type="PhylomeDB" id="Q9R1Q9"/>
<dbReference type="TreeFam" id="TF325819"/>
<dbReference type="Reactome" id="R-MMU-77387">
    <property type="pathway name" value="Insulin receptor recycling"/>
</dbReference>
<dbReference type="Reactome" id="R-MMU-8980692">
    <property type="pathway name" value="RHOA GTPase cycle"/>
</dbReference>
<dbReference type="Reactome" id="R-MMU-917977">
    <property type="pathway name" value="Transferrin endocytosis and recycling"/>
</dbReference>
<dbReference type="Reactome" id="R-MMU-983712">
    <property type="pathway name" value="Ion channel transport"/>
</dbReference>
<dbReference type="BioGRID-ORCS" id="54411">
    <property type="hits" value="23 hits in 77 CRISPR screens"/>
</dbReference>
<dbReference type="CD-CODE" id="CE726F99">
    <property type="entry name" value="Postsynaptic density"/>
</dbReference>
<dbReference type="ChiTaRS" id="Atp6ap1">
    <property type="organism name" value="mouse"/>
</dbReference>
<dbReference type="PRO" id="PR:Q9R1Q9"/>
<dbReference type="Proteomes" id="UP000000589">
    <property type="component" value="Chromosome X"/>
</dbReference>
<dbReference type="RNAct" id="Q9R1Q9">
    <property type="molecule type" value="protein"/>
</dbReference>
<dbReference type="Bgee" id="ENSMUSG00000019087">
    <property type="expression patterns" value="Expressed in stroma of bone marrow and 274 other cell types or tissues"/>
</dbReference>
<dbReference type="ExpressionAtlas" id="Q9R1Q9">
    <property type="expression patterns" value="baseline and differential"/>
</dbReference>
<dbReference type="GO" id="GO:0030665">
    <property type="term" value="C:clathrin-coated vesicle membrane"/>
    <property type="evidence" value="ECO:0007669"/>
    <property type="project" value="UniProtKB-SubCell"/>
</dbReference>
<dbReference type="GO" id="GO:0005789">
    <property type="term" value="C:endoplasmic reticulum membrane"/>
    <property type="evidence" value="ECO:0007669"/>
    <property type="project" value="UniProtKB-SubCell"/>
</dbReference>
<dbReference type="GO" id="GO:0033116">
    <property type="term" value="C:endoplasmic reticulum-Golgi intermediate compartment membrane"/>
    <property type="evidence" value="ECO:0007669"/>
    <property type="project" value="UniProtKB-SubCell"/>
</dbReference>
<dbReference type="GO" id="GO:0010008">
    <property type="term" value="C:endosome membrane"/>
    <property type="evidence" value="ECO:0000315"/>
    <property type="project" value="MGI"/>
</dbReference>
<dbReference type="GO" id="GO:0030672">
    <property type="term" value="C:synaptic vesicle membrane"/>
    <property type="evidence" value="ECO:0007669"/>
    <property type="project" value="UniProtKB-SubCell"/>
</dbReference>
<dbReference type="GO" id="GO:0001671">
    <property type="term" value="F:ATPase activator activity"/>
    <property type="evidence" value="ECO:0000315"/>
    <property type="project" value="MGI"/>
</dbReference>
<dbReference type="GO" id="GO:0031267">
    <property type="term" value="F:small GTPase binding"/>
    <property type="evidence" value="ECO:0000353"/>
    <property type="project" value="UniProtKB"/>
</dbReference>
<dbReference type="GO" id="GO:0141109">
    <property type="term" value="F:transporter activator activity"/>
    <property type="evidence" value="ECO:0000315"/>
    <property type="project" value="MGI"/>
</dbReference>
<dbReference type="GO" id="GO:0036295">
    <property type="term" value="P:cellular response to increased oxygen levels"/>
    <property type="evidence" value="ECO:0000250"/>
    <property type="project" value="UniProtKB"/>
</dbReference>
<dbReference type="GO" id="GO:0099638">
    <property type="term" value="P:endosome to plasma membrane protein transport"/>
    <property type="evidence" value="ECO:0000315"/>
    <property type="project" value="UniProtKB"/>
</dbReference>
<dbReference type="GO" id="GO:0006879">
    <property type="term" value="P:intracellular iron ion homeostasis"/>
    <property type="evidence" value="ECO:0000250"/>
    <property type="project" value="UniProtKB"/>
</dbReference>
<dbReference type="GO" id="GO:0036035">
    <property type="term" value="P:osteoclast development"/>
    <property type="evidence" value="ECO:0000315"/>
    <property type="project" value="UniProtKB"/>
</dbReference>
<dbReference type="GO" id="GO:0097401">
    <property type="term" value="P:synaptic vesicle lumen acidification"/>
    <property type="evidence" value="ECO:0000314"/>
    <property type="project" value="SynGO"/>
</dbReference>
<dbReference type="FunFam" id="2.40.160.110:FF:000003">
    <property type="entry name" value="ATPase H+ transporting accessory protein 1"/>
    <property type="match status" value="1"/>
</dbReference>
<dbReference type="Gene3D" id="2.40.160.110">
    <property type="match status" value="1"/>
</dbReference>
<dbReference type="InterPro" id="IPR008388">
    <property type="entry name" value="Ac45_acc_su"/>
</dbReference>
<dbReference type="InterPro" id="IPR046756">
    <property type="entry name" value="VAS1/VOA1_TM"/>
</dbReference>
<dbReference type="InterPro" id="IPR046755">
    <property type="entry name" value="VAS1_LD"/>
</dbReference>
<dbReference type="PANTHER" id="PTHR12471:SF2">
    <property type="entry name" value="V-TYPE PROTON ATPASE SUBUNIT S1"/>
    <property type="match status" value="1"/>
</dbReference>
<dbReference type="PANTHER" id="PTHR12471">
    <property type="entry name" value="VACUOLAR ATP SYNTHASE SUBUNIT S1"/>
    <property type="match status" value="1"/>
</dbReference>
<dbReference type="Pfam" id="PF20520">
    <property type="entry name" value="Ac45-VOA1_TM"/>
    <property type="match status" value="1"/>
</dbReference>
<dbReference type="Pfam" id="PF05827">
    <property type="entry name" value="VAS1_LD"/>
    <property type="match status" value="1"/>
</dbReference>
<evidence type="ECO:0000250" key="1">
    <source>
        <dbReference type="UniProtKB" id="O54715"/>
    </source>
</evidence>
<evidence type="ECO:0000250" key="2">
    <source>
        <dbReference type="UniProtKB" id="Q15904"/>
    </source>
</evidence>
<evidence type="ECO:0000255" key="3"/>
<evidence type="ECO:0000269" key="4">
    <source>
    </source>
</evidence>
<evidence type="ECO:0000269" key="5">
    <source>
    </source>
</evidence>
<evidence type="ECO:0000269" key="6">
    <source>
    </source>
</evidence>
<evidence type="ECO:0000305" key="7"/>
<comment type="function">
    <text evidence="2 4">Accessory subunit of the proton-transporting vacuolar (V)-ATPase protein pump, which is required for luminal acidification of secretory vesicles (PubMed:18713856). Guides the V-type ATPase into specialized subcellular compartments, such as neuroendocrine regulated secretory vesicles or the ruffled border of the osteoclast, thereby regulating its activity. Involved in membrane trafficking and Ca(2+)-dependent membrane fusion. May play a role in the assembly of the V-type ATPase complex. In aerobic conditions, involved in intracellular iron homeostasis, thus triggering the activity of Fe(2+) prolyl hydroxylase (PHD) enzymes, and leading to HIF1A hydroxylation and subsequent proteasomal degradation (By similarity). In islets of Langerhans cells, may regulate the acidification of dense-core secretory granules (PubMed:18713856).</text>
</comment>
<comment type="subunit">
    <text evidence="2">Accessory component of the multisubunit proton-transporting vacuolar (V)-ATPase protein pump. Interacts (via N-terminus) with ATP6AP2 (via N-terminus). Interacts with RNASEK (By similarity). Interacts with TMEM106B (via C-terminus) (By similarity).</text>
</comment>
<comment type="subcellular location">
    <subcellularLocation>
        <location evidence="2">Endoplasmic reticulum membrane</location>
        <topology evidence="2">Single-pass type I membrane protein</topology>
    </subcellularLocation>
    <subcellularLocation>
        <location evidence="2">Endoplasmic reticulum-Golgi intermediate compartment membrane</location>
    </subcellularLocation>
    <subcellularLocation>
        <location evidence="1">Cytoplasmic vesicle</location>
        <location evidence="1">Secretory vesicle</location>
        <location evidence="1">Synaptic vesicle membrane</location>
        <topology evidence="7">Single-pass type I membrane protein</topology>
    </subcellularLocation>
    <subcellularLocation>
        <location evidence="1">Cytoplasmic vesicle</location>
        <location evidence="1">Clathrin-coated vesicle membrane</location>
        <topology evidence="7">Single-pass type I membrane protein</topology>
    </subcellularLocation>
    <text evidence="2">Not detected in trans-Golgi network.</text>
</comment>
<comment type="tissue specificity">
    <text evidence="4 6">Expressed in brain cortex (at protein level) (PubMed:27231034). Highly expressed in islets of Langerhans (PubMed:18713856). Expressed in pancreatic acini, pituitary gland, adrenal gland, lung, brain and bone marrow (PubMed:18713856).</text>
</comment>
<comment type="PTM">
    <text evidence="4">N-glycosylated.</text>
</comment>
<comment type="similarity">
    <text evidence="7">Belongs to the vacuolar ATPase subunit S1 family.</text>
</comment>
<accession>Q9R1Q9</accession>
<proteinExistence type="evidence at protein level"/>
<keyword id="KW-0002">3D-structure</keyword>
<keyword id="KW-0968">Cytoplasmic vesicle</keyword>
<keyword id="KW-0903">Direct protein sequencing</keyword>
<keyword id="KW-1015">Disulfide bond</keyword>
<keyword id="KW-0256">Endoplasmic reticulum</keyword>
<keyword id="KW-0325">Glycoprotein</keyword>
<keyword id="KW-0375">Hydrogen ion transport</keyword>
<keyword id="KW-0406">Ion transport</keyword>
<keyword id="KW-0472">Membrane</keyword>
<keyword id="KW-1185">Reference proteome</keyword>
<keyword id="KW-0732">Signal</keyword>
<keyword id="KW-0770">Synapse</keyword>
<keyword id="KW-0812">Transmembrane</keyword>
<keyword id="KW-1133">Transmembrane helix</keyword>
<keyword id="KW-0813">Transport</keyword>